<keyword id="KW-0009">Actin-binding</keyword>
<keyword id="KW-0963">Cytoplasm</keyword>
<keyword id="KW-0206">Cytoskeleton</keyword>
<keyword id="KW-1185">Reference proteome</keyword>
<reference key="1">
    <citation type="journal article" date="2002" name="Exp. Cell Res.">
        <title>Testis fascin (FSCN3): a novel paralog of the actin-bundling protein fascin expressed specifically in the elongate spermatid head.</title>
        <authorList>
            <person name="Tubb B."/>
            <person name="Mulholland D.J."/>
            <person name="Vogl W."/>
            <person name="Lan Z.J."/>
            <person name="Niederberger C."/>
            <person name="Cooney A."/>
            <person name="Bryan J."/>
        </authorList>
    </citation>
    <scope>NUCLEOTIDE SEQUENCE [MRNA]</scope>
    <source>
        <tissue>Testis</tissue>
    </source>
</reference>
<reference key="2">
    <citation type="submission" date="2005-09" db="EMBL/GenBank/DDBJ databases">
        <authorList>
            <person name="Mural R.J."/>
            <person name="Adams M.D."/>
            <person name="Myers E.W."/>
            <person name="Smith H.O."/>
            <person name="Venter J.C."/>
        </authorList>
    </citation>
    <scope>NUCLEOTIDE SEQUENCE [LARGE SCALE GENOMIC DNA]</scope>
</reference>
<reference key="3">
    <citation type="journal article" date="2004" name="Genome Res.">
        <title>The status, quality, and expansion of the NIH full-length cDNA project: the Mammalian Gene Collection (MGC).</title>
        <authorList>
            <consortium name="The MGC Project Team"/>
        </authorList>
    </citation>
    <scope>NUCLEOTIDE SEQUENCE [LARGE SCALE MRNA]</scope>
    <source>
        <tissue>Testis</tissue>
    </source>
</reference>
<accession>Q9QXW4</accession>
<accession>Q80YU6</accession>
<comment type="function">
    <text evidence="1">Acts as an actin bundling protein.</text>
</comment>
<comment type="subcellular location">
    <subcellularLocation>
        <location evidence="1">Cytoplasm</location>
        <location evidence="1">Cytoskeleton</location>
    </subcellularLocation>
</comment>
<comment type="tissue specificity">
    <text>Expressed in testis.</text>
</comment>
<comment type="similarity">
    <text evidence="2">Belongs to the fascin family.</text>
</comment>
<proteinExistence type="evidence at transcript level"/>
<sequence>MAEVDWIHRHPKAEDLRVGLISWAGTYLTFEAYKSSVTASAKSLGRRQTWELLVSNEHESQAVIRLKSLQGLYLLCEADGTVCYGRPRTSHHGCFLLRFHRNGKWTLQCIISGRYLESDGEDVFCNSRVLSAYHMWTPRPALHVHVILYSPIYHSYARADHTVGRIWVDAAIPCLEECGFLLHFQDGCYHLETSTHHFLSRVDRLVPQRSSQTAFHMQVRPRGLVALCDGEGGTLYPQGSHLLLGMGSAPMKGEEWFVLQHFPTWVSLKSKSRRFLSVIYDAEVCAASERLTQMSLFQYECDSETPTLQLRSANGYYLAQRRHRAIIADGHPMESDTFFRVHWNCGKITLQSPNGRFLGIASDGLLMANVTIPGPNEELGIRFANRPFLVLRGRYGYVGSSSDHDLLKCNMDQPDCIQLLPCRQGIYHFQAQGGSFWSITSFGTFRPWGKFALNFCIELQGSSLLTVLAPNGFYLRADRSGTLLADSEEITKECIWEF</sequence>
<dbReference type="EMBL" id="AF176024">
    <property type="protein sequence ID" value="AAF19797.1"/>
    <property type="molecule type" value="mRNA"/>
</dbReference>
<dbReference type="EMBL" id="CH466533">
    <property type="protein sequence ID" value="EDL13800.1"/>
    <property type="molecule type" value="Genomic_DNA"/>
</dbReference>
<dbReference type="EMBL" id="BC050759">
    <property type="protein sequence ID" value="AAH50759.1"/>
    <property type="molecule type" value="mRNA"/>
</dbReference>
<dbReference type="CCDS" id="CCDS39446.1"/>
<dbReference type="RefSeq" id="NP_062515.2">
    <property type="nucleotide sequence ID" value="NM_019569.2"/>
</dbReference>
<dbReference type="SMR" id="Q9QXW4"/>
<dbReference type="FunCoup" id="Q9QXW4">
    <property type="interactions" value="7"/>
</dbReference>
<dbReference type="STRING" id="10090.ENSMUSP00000031719"/>
<dbReference type="PhosphoSitePlus" id="Q9QXW4"/>
<dbReference type="PaxDb" id="10090-ENSMUSP00000031719"/>
<dbReference type="ProteomicsDB" id="271809"/>
<dbReference type="Antibodypedia" id="45993">
    <property type="antibodies" value="151 antibodies from 22 providers"/>
</dbReference>
<dbReference type="DNASU" id="56223"/>
<dbReference type="Ensembl" id="ENSMUST00000031719.7">
    <property type="protein sequence ID" value="ENSMUSP00000031719.7"/>
    <property type="gene ID" value="ENSMUSG00000029707.7"/>
</dbReference>
<dbReference type="GeneID" id="56223"/>
<dbReference type="KEGG" id="mmu:56223"/>
<dbReference type="UCSC" id="uc009bcr.1">
    <property type="organism name" value="mouse"/>
</dbReference>
<dbReference type="AGR" id="MGI:1890386"/>
<dbReference type="CTD" id="29999"/>
<dbReference type="MGI" id="MGI:1890386">
    <property type="gene designation" value="Fscn3"/>
</dbReference>
<dbReference type="VEuPathDB" id="HostDB:ENSMUSG00000029707"/>
<dbReference type="eggNOG" id="ENOG502QSD9">
    <property type="taxonomic scope" value="Eukaryota"/>
</dbReference>
<dbReference type="GeneTree" id="ENSGT00950000183157"/>
<dbReference type="HOGENOM" id="CLU_030960_1_0_1"/>
<dbReference type="InParanoid" id="Q9QXW4"/>
<dbReference type="OMA" id="MADGHPM"/>
<dbReference type="OrthoDB" id="10259868at2759"/>
<dbReference type="PhylomeDB" id="Q9QXW4"/>
<dbReference type="TreeFam" id="TF323992"/>
<dbReference type="BioGRID-ORCS" id="56223">
    <property type="hits" value="1 hit in 77 CRISPR screens"/>
</dbReference>
<dbReference type="PRO" id="PR:Q9QXW4"/>
<dbReference type="Proteomes" id="UP000000589">
    <property type="component" value="Chromosome 6"/>
</dbReference>
<dbReference type="RNAct" id="Q9QXW4">
    <property type="molecule type" value="protein"/>
</dbReference>
<dbReference type="Bgee" id="ENSMUSG00000029707">
    <property type="expression patterns" value="Expressed in seminiferous tubule of testis and 17 other cell types or tissues"/>
</dbReference>
<dbReference type="GO" id="GO:0015629">
    <property type="term" value="C:actin cytoskeleton"/>
    <property type="evidence" value="ECO:0000250"/>
    <property type="project" value="UniProtKB"/>
</dbReference>
<dbReference type="GO" id="GO:0005737">
    <property type="term" value="C:cytoplasm"/>
    <property type="evidence" value="ECO:0000314"/>
    <property type="project" value="MGI"/>
</dbReference>
<dbReference type="GO" id="GO:0003779">
    <property type="term" value="F:actin binding"/>
    <property type="evidence" value="ECO:0000250"/>
    <property type="project" value="UniProtKB"/>
</dbReference>
<dbReference type="GO" id="GO:0051015">
    <property type="term" value="F:actin filament binding"/>
    <property type="evidence" value="ECO:0000250"/>
    <property type="project" value="UniProtKB"/>
</dbReference>
<dbReference type="GO" id="GO:0030674">
    <property type="term" value="F:protein-macromolecule adaptor activity"/>
    <property type="evidence" value="ECO:0007669"/>
    <property type="project" value="InterPro"/>
</dbReference>
<dbReference type="GO" id="GO:0030036">
    <property type="term" value="P:actin cytoskeleton organization"/>
    <property type="evidence" value="ECO:0000250"/>
    <property type="project" value="UniProtKB"/>
</dbReference>
<dbReference type="GO" id="GO:0007015">
    <property type="term" value="P:actin filament organization"/>
    <property type="evidence" value="ECO:0007669"/>
    <property type="project" value="InterPro"/>
</dbReference>
<dbReference type="GO" id="GO:0007286">
    <property type="term" value="P:spermatid development"/>
    <property type="evidence" value="ECO:0000304"/>
    <property type="project" value="MGI"/>
</dbReference>
<dbReference type="CDD" id="cd23354">
    <property type="entry name" value="beta-trefoil_FSCN3_rpt3"/>
    <property type="match status" value="1"/>
</dbReference>
<dbReference type="FunFam" id="2.80.10.50:FF:000045">
    <property type="entry name" value="Fascin"/>
    <property type="match status" value="1"/>
</dbReference>
<dbReference type="FunFam" id="2.80.10.50:FF:000050">
    <property type="entry name" value="Fascin"/>
    <property type="match status" value="1"/>
</dbReference>
<dbReference type="FunFam" id="2.80.10.50:FF:000051">
    <property type="entry name" value="Fascin"/>
    <property type="match status" value="1"/>
</dbReference>
<dbReference type="FunFam" id="2.80.10.50:FF:000055">
    <property type="entry name" value="Fascin"/>
    <property type="match status" value="1"/>
</dbReference>
<dbReference type="Gene3D" id="2.80.10.50">
    <property type="match status" value="4"/>
</dbReference>
<dbReference type="InterPro" id="IPR008999">
    <property type="entry name" value="Actin-crosslinking"/>
</dbReference>
<dbReference type="InterPro" id="IPR010431">
    <property type="entry name" value="Fascin"/>
</dbReference>
<dbReference type="InterPro" id="IPR022768">
    <property type="entry name" value="Fascin-like_dom"/>
</dbReference>
<dbReference type="InterPro" id="IPR024703">
    <property type="entry name" value="Fascin_metazoans"/>
</dbReference>
<dbReference type="PANTHER" id="PTHR10551">
    <property type="entry name" value="FASCIN"/>
    <property type="match status" value="1"/>
</dbReference>
<dbReference type="PANTHER" id="PTHR10551:SF1">
    <property type="entry name" value="FASCIN-3"/>
    <property type="match status" value="1"/>
</dbReference>
<dbReference type="Pfam" id="PF06268">
    <property type="entry name" value="Fascin"/>
    <property type="match status" value="2"/>
</dbReference>
<dbReference type="PIRSF" id="PIRSF005682">
    <property type="entry name" value="Fascin"/>
    <property type="match status" value="1"/>
</dbReference>
<dbReference type="SUPFAM" id="SSF50405">
    <property type="entry name" value="Actin-crosslinking proteins"/>
    <property type="match status" value="4"/>
</dbReference>
<gene>
    <name type="primary">Fscn3</name>
</gene>
<organism>
    <name type="scientific">Mus musculus</name>
    <name type="common">Mouse</name>
    <dbReference type="NCBI Taxonomy" id="10090"/>
    <lineage>
        <taxon>Eukaryota</taxon>
        <taxon>Metazoa</taxon>
        <taxon>Chordata</taxon>
        <taxon>Craniata</taxon>
        <taxon>Vertebrata</taxon>
        <taxon>Euteleostomi</taxon>
        <taxon>Mammalia</taxon>
        <taxon>Eutheria</taxon>
        <taxon>Euarchontoglires</taxon>
        <taxon>Glires</taxon>
        <taxon>Rodentia</taxon>
        <taxon>Myomorpha</taxon>
        <taxon>Muroidea</taxon>
        <taxon>Muridae</taxon>
        <taxon>Murinae</taxon>
        <taxon>Mus</taxon>
        <taxon>Mus</taxon>
    </lineage>
</organism>
<name>FSCN3_MOUSE</name>
<evidence type="ECO:0000250" key="1"/>
<evidence type="ECO:0000305" key="2"/>
<feature type="chain" id="PRO_0000219384" description="Fascin-3">
    <location>
        <begin position="1"/>
        <end position="498"/>
    </location>
</feature>
<feature type="sequence conflict" description="In Ref. 1; AAF19797." evidence="2" ref="1">
    <original>Q</original>
    <variation>A</variation>
    <location>
        <position position="238"/>
    </location>
</feature>
<protein>
    <recommendedName>
        <fullName>Fascin-3</fullName>
    </recommendedName>
    <alternativeName>
        <fullName>Testis fascin</fullName>
    </alternativeName>
</protein>